<name>TVP18_BOTFB</name>
<sequence>MTIAEEFATRNFSIYGQWTGVVCILLCFALGIANLFHVSLLIIFSALCLVSSFLIIFIEIPLLLRICPTSSTFDTFMRRFTTNYMRAAIYMGMAIVQWLSIIIDASSLIAAAVLLTIAAGFYALAGLKGQGFVGSKTLGGQGVAQMIL</sequence>
<protein>
    <recommendedName>
        <fullName>Golgi apparatus membrane protein tvp18</fullName>
    </recommendedName>
</protein>
<organism>
    <name type="scientific">Botryotinia fuckeliana (strain B05.10)</name>
    <name type="common">Noble rot fungus</name>
    <name type="synonym">Botrytis cinerea</name>
    <dbReference type="NCBI Taxonomy" id="332648"/>
    <lineage>
        <taxon>Eukaryota</taxon>
        <taxon>Fungi</taxon>
        <taxon>Dikarya</taxon>
        <taxon>Ascomycota</taxon>
        <taxon>Pezizomycotina</taxon>
        <taxon>Leotiomycetes</taxon>
        <taxon>Helotiales</taxon>
        <taxon>Sclerotiniaceae</taxon>
        <taxon>Botrytis</taxon>
    </lineage>
</organism>
<feature type="chain" id="PRO_0000343014" description="Golgi apparatus membrane protein tvp18">
    <location>
        <begin position="1"/>
        <end position="148"/>
    </location>
</feature>
<feature type="transmembrane region" description="Helical" evidence="2">
    <location>
        <begin position="12"/>
        <end position="32"/>
    </location>
</feature>
<feature type="transmembrane region" description="Helical" evidence="2">
    <location>
        <begin position="38"/>
        <end position="58"/>
    </location>
</feature>
<feature type="transmembrane region" description="Helical" evidence="2">
    <location>
        <begin position="85"/>
        <end position="105"/>
    </location>
</feature>
<feature type="transmembrane region" description="Helical" evidence="2">
    <location>
        <begin position="107"/>
        <end position="127"/>
    </location>
</feature>
<feature type="glycosylation site" description="N-linked (GlcNAc...) asparagine" evidence="2">
    <location>
        <position position="11"/>
    </location>
</feature>
<accession>A6RRF7</accession>
<accession>A0A384JWZ0</accession>
<proteinExistence type="inferred from homology"/>
<dbReference type="EMBL" id="CP009815">
    <property type="protein sequence ID" value="ATZ55105.1"/>
    <property type="molecule type" value="Genomic_DNA"/>
</dbReference>
<dbReference type="GlyCosmos" id="A6RRF7">
    <property type="glycosylation" value="1 site, No reported glycans"/>
</dbReference>
<dbReference type="EnsemblFungi" id="Bcin11g03980.1">
    <property type="protein sequence ID" value="Bcin11p03980.1"/>
    <property type="gene ID" value="Bcin11g03980"/>
</dbReference>
<dbReference type="VEuPathDB" id="FungiDB:Bcin11g03980"/>
<dbReference type="OrthoDB" id="5591789at2759"/>
<dbReference type="Proteomes" id="UP000001798">
    <property type="component" value="Chromosome bcin11"/>
</dbReference>
<dbReference type="GO" id="GO:0000139">
    <property type="term" value="C:Golgi membrane"/>
    <property type="evidence" value="ECO:0007669"/>
    <property type="project" value="UniProtKB-SubCell"/>
</dbReference>
<dbReference type="GO" id="GO:0016192">
    <property type="term" value="P:vesicle-mediated transport"/>
    <property type="evidence" value="ECO:0007669"/>
    <property type="project" value="TreeGrafter"/>
</dbReference>
<dbReference type="InterPro" id="IPR019365">
    <property type="entry name" value="TVP18/Ca-channel_flower"/>
</dbReference>
<dbReference type="PANTHER" id="PTHR13314">
    <property type="entry name" value="CALCIUM CHANNEL FLOWER HOMOLOG"/>
    <property type="match status" value="1"/>
</dbReference>
<dbReference type="PANTHER" id="PTHR13314:SF2">
    <property type="entry name" value="CALCIUM CHANNEL FLOWER HOMOLOG"/>
    <property type="match status" value="1"/>
</dbReference>
<dbReference type="Pfam" id="PF10233">
    <property type="entry name" value="Cg6151-P"/>
    <property type="match status" value="1"/>
</dbReference>
<dbReference type="SMART" id="SM01077">
    <property type="entry name" value="Cg6151-P"/>
    <property type="match status" value="1"/>
</dbReference>
<reference key="1">
    <citation type="journal article" date="2011" name="PLoS Genet.">
        <title>Genomic analysis of the necrotrophic fungal pathogens Sclerotinia sclerotiorum and Botrytis cinerea.</title>
        <authorList>
            <person name="Amselem J."/>
            <person name="Cuomo C.A."/>
            <person name="van Kan J.A.L."/>
            <person name="Viaud M."/>
            <person name="Benito E.P."/>
            <person name="Couloux A."/>
            <person name="Coutinho P.M."/>
            <person name="de Vries R.P."/>
            <person name="Dyer P.S."/>
            <person name="Fillinger S."/>
            <person name="Fournier E."/>
            <person name="Gout L."/>
            <person name="Hahn M."/>
            <person name="Kohn L."/>
            <person name="Lapalu N."/>
            <person name="Plummer K.M."/>
            <person name="Pradier J.-M."/>
            <person name="Quevillon E."/>
            <person name="Sharon A."/>
            <person name="Simon A."/>
            <person name="ten Have A."/>
            <person name="Tudzynski B."/>
            <person name="Tudzynski P."/>
            <person name="Wincker P."/>
            <person name="Andrew M."/>
            <person name="Anthouard V."/>
            <person name="Beever R.E."/>
            <person name="Beffa R."/>
            <person name="Benoit I."/>
            <person name="Bouzid O."/>
            <person name="Brault B."/>
            <person name="Chen Z."/>
            <person name="Choquer M."/>
            <person name="Collemare J."/>
            <person name="Cotton P."/>
            <person name="Danchin E.G."/>
            <person name="Da Silva C."/>
            <person name="Gautier A."/>
            <person name="Giraud C."/>
            <person name="Giraud T."/>
            <person name="Gonzalez C."/>
            <person name="Grossetete S."/>
            <person name="Gueldener U."/>
            <person name="Henrissat B."/>
            <person name="Howlett B.J."/>
            <person name="Kodira C."/>
            <person name="Kretschmer M."/>
            <person name="Lappartient A."/>
            <person name="Leroch M."/>
            <person name="Levis C."/>
            <person name="Mauceli E."/>
            <person name="Neuveglise C."/>
            <person name="Oeser B."/>
            <person name="Pearson M."/>
            <person name="Poulain J."/>
            <person name="Poussereau N."/>
            <person name="Quesneville H."/>
            <person name="Rascle C."/>
            <person name="Schumacher J."/>
            <person name="Segurens B."/>
            <person name="Sexton A."/>
            <person name="Silva E."/>
            <person name="Sirven C."/>
            <person name="Soanes D.M."/>
            <person name="Talbot N.J."/>
            <person name="Templeton M."/>
            <person name="Yandava C."/>
            <person name="Yarden O."/>
            <person name="Zeng Q."/>
            <person name="Rollins J.A."/>
            <person name="Lebrun M.-H."/>
            <person name="Dickman M."/>
        </authorList>
    </citation>
    <scope>NUCLEOTIDE SEQUENCE [LARGE SCALE GENOMIC DNA]</scope>
    <source>
        <strain>B05.10</strain>
    </source>
</reference>
<reference key="2">
    <citation type="journal article" date="2012" name="Eukaryot. Cell">
        <title>Genome update of Botrytis cinerea strains B05.10 and T4.</title>
        <authorList>
            <person name="Staats M."/>
            <person name="van Kan J.A.L."/>
        </authorList>
    </citation>
    <scope>NUCLEOTIDE SEQUENCE [LARGE SCALE GENOMIC DNA]</scope>
    <scope>GENOME REANNOTATION</scope>
    <source>
        <strain>B05.10</strain>
    </source>
</reference>
<reference key="3">
    <citation type="journal article" date="2017" name="Mol. Plant Pathol.">
        <title>A gapless genome sequence of the fungus Botrytis cinerea.</title>
        <authorList>
            <person name="van Kan J.A.L."/>
            <person name="Stassen J.H.M."/>
            <person name="Mosbach A."/>
            <person name="van der Lee T.A.J."/>
            <person name="Faino L."/>
            <person name="Farmer A.D."/>
            <person name="Papasotiriou D.G."/>
            <person name="Zhou S."/>
            <person name="Seidl M.F."/>
            <person name="Cottam E."/>
            <person name="Edel D."/>
            <person name="Hahn M."/>
            <person name="Schwartz D.C."/>
            <person name="Dietrich R.A."/>
            <person name="Widdison S."/>
            <person name="Scalliet G."/>
        </authorList>
    </citation>
    <scope>NUCLEOTIDE SEQUENCE [LARGE SCALE GENOMIC DNA]</scope>
    <scope>GENOME REANNOTATION</scope>
    <source>
        <strain>B05.10</strain>
    </source>
</reference>
<comment type="function">
    <text evidence="1">Golgi membrane protein involved in vesicular trafficking.</text>
</comment>
<comment type="subcellular location">
    <subcellularLocation>
        <location evidence="1">Golgi apparatus membrane</location>
        <topology evidence="1">Multi-pass membrane protein</topology>
    </subcellularLocation>
</comment>
<comment type="similarity">
    <text evidence="3">Belongs to the TVP18 family.</text>
</comment>
<evidence type="ECO:0000250" key="1"/>
<evidence type="ECO:0000255" key="2"/>
<evidence type="ECO:0000305" key="3"/>
<gene>
    <name type="primary">tvp18</name>
    <name type="ORF">BC1G_03398</name>
    <name type="ORF">BCIN_11g03980</name>
</gene>
<keyword id="KW-0325">Glycoprotein</keyword>
<keyword id="KW-0333">Golgi apparatus</keyword>
<keyword id="KW-0472">Membrane</keyword>
<keyword id="KW-1185">Reference proteome</keyword>
<keyword id="KW-0812">Transmembrane</keyword>
<keyword id="KW-1133">Transmembrane helix</keyword>